<protein>
    <recommendedName>
        <fullName>Ribonucleoside-diphosphate reductase subunit M2</fullName>
        <ecNumber>1.17.4.1</ecNumber>
    </recommendedName>
    <alternativeName>
        <fullName>Ribonucleotide reductase small chain</fullName>
    </alternativeName>
    <alternativeName>
        <fullName>Ribonucleotide reductase small subunit</fullName>
    </alternativeName>
</protein>
<evidence type="ECO:0000250" key="1"/>
<evidence type="ECO:0000250" key="2">
    <source>
        <dbReference type="UniProtKB" id="P11157"/>
    </source>
</evidence>
<evidence type="ECO:0000250" key="3">
    <source>
        <dbReference type="UniProtKB" id="P31350"/>
    </source>
</evidence>
<evidence type="ECO:0000255" key="4">
    <source>
        <dbReference type="PROSITE-ProRule" id="PRU10014"/>
    </source>
</evidence>
<evidence type="ECO:0000305" key="5"/>
<feature type="chain" id="PRO_0000190451" description="Ribonucleoside-diphosphate reductase subunit M2">
    <location>
        <begin position="1"/>
        <end position="390"/>
    </location>
</feature>
<feature type="short sequence motif" description="Cy" evidence="3">
    <location>
        <begin position="49"/>
        <end position="51"/>
    </location>
</feature>
<feature type="active site" evidence="4">
    <location>
        <position position="177"/>
    </location>
</feature>
<feature type="binding site" evidence="4">
    <location>
        <position position="139"/>
    </location>
    <ligand>
        <name>Fe cation</name>
        <dbReference type="ChEBI" id="CHEBI:24875"/>
        <label>1</label>
    </ligand>
</feature>
<feature type="binding site" evidence="4">
    <location>
        <position position="170"/>
    </location>
    <ligand>
        <name>Fe cation</name>
        <dbReference type="ChEBI" id="CHEBI:24875"/>
        <label>1</label>
    </ligand>
</feature>
<feature type="binding site" evidence="1">
    <location>
        <position position="170"/>
    </location>
    <ligand>
        <name>Fe cation</name>
        <dbReference type="ChEBI" id="CHEBI:24875"/>
        <label>2</label>
    </ligand>
</feature>
<feature type="binding site" evidence="4">
    <location>
        <position position="173"/>
    </location>
    <ligand>
        <name>Fe cation</name>
        <dbReference type="ChEBI" id="CHEBI:24875"/>
        <label>1</label>
    </ligand>
</feature>
<feature type="binding site" evidence="1">
    <location>
        <position position="233"/>
    </location>
    <ligand>
        <name>Fe cation</name>
        <dbReference type="ChEBI" id="CHEBI:24875"/>
        <label>2</label>
    </ligand>
</feature>
<feature type="binding site" evidence="4">
    <location>
        <position position="267"/>
    </location>
    <ligand>
        <name>Fe cation</name>
        <dbReference type="ChEBI" id="CHEBI:24875"/>
        <label>1</label>
    </ligand>
</feature>
<feature type="binding site" evidence="1">
    <location>
        <position position="267"/>
    </location>
    <ligand>
        <name>Fe cation</name>
        <dbReference type="ChEBI" id="CHEBI:24875"/>
        <label>2</label>
    </ligand>
</feature>
<feature type="binding site" evidence="1">
    <location>
        <position position="270"/>
    </location>
    <ligand>
        <name>Fe cation</name>
        <dbReference type="ChEBI" id="CHEBI:24875"/>
        <label>2</label>
    </ligand>
</feature>
<feature type="modified residue" description="Phosphoserine" evidence="2">
    <location>
        <position position="20"/>
    </location>
</feature>
<feature type="modified residue" description="Phosphothreonine" evidence="2">
    <location>
        <position position="33"/>
    </location>
</feature>
<sequence>MLSVRAPLATIADQQQLHLSPLKRLSLADKENTPPTLSSARVLASKAARRIFQDSAELESKAPTKPSIEEEPLLRENPRRFVVFPIEYHDIWQMYKKAEASFWTAEEVDLSKDIQHWEALKPDERHFISHVLAFFAASDGIVNENLVERFSQEVQVTEARCFYGFQIAMENIHSEMYSLLIDTYIKDSKEREYLFNAIETMPCVKKKADWALRWIGDKEATYGERVVAFAAVEGIFFSGSFASIFWLKKRGLMPGLTFSNELISRDEGLHCDFACLMFKHLVHKPSEQRVKEIITNSVRIEQEFLTEALPVKLIGMNCTLMKQYIEFVADRLMLELGFNKIFKVENPFDFMENISLEGKTNFFEKRVGEYQRMGVMSNSTENSFTLDADF</sequence>
<gene>
    <name type="primary">Rrm2</name>
</gene>
<dbReference type="EC" id="1.17.4.1"/>
<dbReference type="EMBL" id="BC099082">
    <property type="protein sequence ID" value="AAH99082.1"/>
    <property type="molecule type" value="mRNA"/>
</dbReference>
<dbReference type="RefSeq" id="NP_001020911.1">
    <property type="nucleotide sequence ID" value="NM_001025740.3"/>
</dbReference>
<dbReference type="RefSeq" id="XP_063118143.1">
    <property type="nucleotide sequence ID" value="XM_063262073.1"/>
</dbReference>
<dbReference type="SMR" id="Q4KLN6"/>
<dbReference type="FunCoup" id="Q4KLN6">
    <property type="interactions" value="873"/>
</dbReference>
<dbReference type="STRING" id="10116.ENSRNOP00000073334"/>
<dbReference type="iPTMnet" id="Q4KLN6"/>
<dbReference type="PhosphoSitePlus" id="Q4KLN6"/>
<dbReference type="jPOST" id="Q4KLN6"/>
<dbReference type="PaxDb" id="10116-ENSRNOP00000037227"/>
<dbReference type="GeneID" id="362720"/>
<dbReference type="KEGG" id="rno:362720"/>
<dbReference type="AGR" id="RGD:1598310"/>
<dbReference type="CTD" id="6241"/>
<dbReference type="RGD" id="1598310">
    <property type="gene designation" value="Rrm2"/>
</dbReference>
<dbReference type="VEuPathDB" id="HostDB:ENSRNOG00000054286"/>
<dbReference type="eggNOG" id="KOG1567">
    <property type="taxonomic scope" value="Eukaryota"/>
</dbReference>
<dbReference type="HOGENOM" id="CLU_035339_2_1_1"/>
<dbReference type="InParanoid" id="Q4KLN6"/>
<dbReference type="PhylomeDB" id="Q4KLN6"/>
<dbReference type="TreeFam" id="TF300465"/>
<dbReference type="Reactome" id="R-RNO-499943">
    <property type="pathway name" value="Interconversion of nucleotide di- and triphosphates"/>
</dbReference>
<dbReference type="PRO" id="PR:Q4KLN6"/>
<dbReference type="Proteomes" id="UP000002494">
    <property type="component" value="Chromosome 6"/>
</dbReference>
<dbReference type="Bgee" id="ENSRNOG00000054286">
    <property type="expression patterns" value="Expressed in thymus and 18 other cell types or tissues"/>
</dbReference>
<dbReference type="GO" id="GO:0005829">
    <property type="term" value="C:cytosol"/>
    <property type="evidence" value="ECO:0000266"/>
    <property type="project" value="RGD"/>
</dbReference>
<dbReference type="GO" id="GO:0005635">
    <property type="term" value="C:nuclear envelope"/>
    <property type="evidence" value="ECO:0000314"/>
    <property type="project" value="RGD"/>
</dbReference>
<dbReference type="GO" id="GO:0005971">
    <property type="term" value="C:ribonucleoside-diphosphate reductase complex"/>
    <property type="evidence" value="ECO:0000266"/>
    <property type="project" value="RGD"/>
</dbReference>
<dbReference type="GO" id="GO:0008199">
    <property type="term" value="F:ferric iron binding"/>
    <property type="evidence" value="ECO:0000266"/>
    <property type="project" value="RGD"/>
</dbReference>
<dbReference type="GO" id="GO:0042802">
    <property type="term" value="F:identical protein binding"/>
    <property type="evidence" value="ECO:0000266"/>
    <property type="project" value="RGD"/>
</dbReference>
<dbReference type="GO" id="GO:0042803">
    <property type="term" value="F:protein homodimerization activity"/>
    <property type="evidence" value="ECO:0000266"/>
    <property type="project" value="RGD"/>
</dbReference>
<dbReference type="GO" id="GO:0004748">
    <property type="term" value="F:ribonucleoside-diphosphate reductase activity, thioredoxin disulfide as acceptor"/>
    <property type="evidence" value="ECO:0000250"/>
    <property type="project" value="UniProtKB"/>
</dbReference>
<dbReference type="GO" id="GO:0009265">
    <property type="term" value="P:2'-deoxyribonucleotide biosynthetic process"/>
    <property type="evidence" value="ECO:0000266"/>
    <property type="project" value="RGD"/>
</dbReference>
<dbReference type="GO" id="GO:0001824">
    <property type="term" value="P:blastocyst development"/>
    <property type="evidence" value="ECO:0000266"/>
    <property type="project" value="RGD"/>
</dbReference>
<dbReference type="GO" id="GO:0009263">
    <property type="term" value="P:deoxyribonucleotide biosynthetic process"/>
    <property type="evidence" value="ECO:0000250"/>
    <property type="project" value="UniProtKB"/>
</dbReference>
<dbReference type="GO" id="GO:0009262">
    <property type="term" value="P:deoxyribonucleotide metabolic process"/>
    <property type="evidence" value="ECO:0000266"/>
    <property type="project" value="RGD"/>
</dbReference>
<dbReference type="GO" id="GO:0008284">
    <property type="term" value="P:positive regulation of cell population proliferation"/>
    <property type="evidence" value="ECO:0000315"/>
    <property type="project" value="RGD"/>
</dbReference>
<dbReference type="GO" id="GO:1900087">
    <property type="term" value="P:positive regulation of G1/S transition of mitotic cell cycle"/>
    <property type="evidence" value="ECO:0000266"/>
    <property type="project" value="RGD"/>
</dbReference>
<dbReference type="GO" id="GO:0051290">
    <property type="term" value="P:protein heterotetramerization"/>
    <property type="evidence" value="ECO:0000266"/>
    <property type="project" value="RGD"/>
</dbReference>
<dbReference type="GO" id="GO:0006206">
    <property type="term" value="P:pyrimidine nucleobase metabolic process"/>
    <property type="evidence" value="ECO:0000270"/>
    <property type="project" value="RGD"/>
</dbReference>
<dbReference type="GO" id="GO:0009185">
    <property type="term" value="P:ribonucleoside diphosphate metabolic process"/>
    <property type="evidence" value="ECO:0000266"/>
    <property type="project" value="RGD"/>
</dbReference>
<dbReference type="CDD" id="cd01049">
    <property type="entry name" value="RNRR2"/>
    <property type="match status" value="1"/>
</dbReference>
<dbReference type="FunFam" id="1.10.620.20:FF:000004">
    <property type="entry name" value="Ribonucleoside-diphosphate reductase subunit M2 B"/>
    <property type="match status" value="1"/>
</dbReference>
<dbReference type="Gene3D" id="1.10.620.20">
    <property type="entry name" value="Ribonucleotide Reductase, subunit A"/>
    <property type="match status" value="1"/>
</dbReference>
<dbReference type="InterPro" id="IPR009078">
    <property type="entry name" value="Ferritin-like_SF"/>
</dbReference>
<dbReference type="InterPro" id="IPR012348">
    <property type="entry name" value="RNR-like"/>
</dbReference>
<dbReference type="InterPro" id="IPR033909">
    <property type="entry name" value="RNR_small"/>
</dbReference>
<dbReference type="InterPro" id="IPR030475">
    <property type="entry name" value="RNR_small_AS"/>
</dbReference>
<dbReference type="InterPro" id="IPR000358">
    <property type="entry name" value="RNR_small_fam"/>
</dbReference>
<dbReference type="PANTHER" id="PTHR23409">
    <property type="entry name" value="RIBONUCLEOSIDE-DIPHOSPHATE REDUCTASE SMALL CHAIN"/>
    <property type="match status" value="1"/>
</dbReference>
<dbReference type="PANTHER" id="PTHR23409:SF20">
    <property type="entry name" value="RIBONUCLEOSIDE-DIPHOSPHATE REDUCTASE SUBUNIT M2"/>
    <property type="match status" value="1"/>
</dbReference>
<dbReference type="Pfam" id="PF00268">
    <property type="entry name" value="Ribonuc_red_sm"/>
    <property type="match status" value="1"/>
</dbReference>
<dbReference type="SUPFAM" id="SSF47240">
    <property type="entry name" value="Ferritin-like"/>
    <property type="match status" value="1"/>
</dbReference>
<dbReference type="PROSITE" id="PS00368">
    <property type="entry name" value="RIBORED_SMALL"/>
    <property type="match status" value="1"/>
</dbReference>
<organism>
    <name type="scientific">Rattus norvegicus</name>
    <name type="common">Rat</name>
    <dbReference type="NCBI Taxonomy" id="10116"/>
    <lineage>
        <taxon>Eukaryota</taxon>
        <taxon>Metazoa</taxon>
        <taxon>Chordata</taxon>
        <taxon>Craniata</taxon>
        <taxon>Vertebrata</taxon>
        <taxon>Euteleostomi</taxon>
        <taxon>Mammalia</taxon>
        <taxon>Eutheria</taxon>
        <taxon>Euarchontoglires</taxon>
        <taxon>Glires</taxon>
        <taxon>Rodentia</taxon>
        <taxon>Myomorpha</taxon>
        <taxon>Muroidea</taxon>
        <taxon>Muridae</taxon>
        <taxon>Murinae</taxon>
        <taxon>Rattus</taxon>
    </lineage>
</organism>
<proteinExistence type="evidence at transcript level"/>
<accession>Q4KLN6</accession>
<name>RIR2_RAT</name>
<keyword id="KW-0963">Cytoplasm</keyword>
<keyword id="KW-0215">Deoxyribonucleotide synthesis</keyword>
<keyword id="KW-0408">Iron</keyword>
<keyword id="KW-0479">Metal-binding</keyword>
<keyword id="KW-0539">Nucleus</keyword>
<keyword id="KW-0560">Oxidoreductase</keyword>
<keyword id="KW-0597">Phosphoprotein</keyword>
<keyword id="KW-1185">Reference proteome</keyword>
<keyword id="KW-0832">Ubl conjugation</keyword>
<reference key="1">
    <citation type="journal article" date="2004" name="Genome Res.">
        <title>The status, quality, and expansion of the NIH full-length cDNA project: the Mammalian Gene Collection (MGC).</title>
        <authorList>
            <consortium name="The MGC Project Team"/>
        </authorList>
    </citation>
    <scope>NUCLEOTIDE SEQUENCE [LARGE SCALE MRNA]</scope>
    <source>
        <tissue>Placenta</tissue>
    </source>
</reference>
<comment type="function">
    <text evidence="1">Provides the precursors necessary for DNA synthesis. Catalyzes the biosynthesis of deoxyribonucleotides from the corresponding ribonucleotides (By similarity). Inhibits Wnt signaling (By similarity).</text>
</comment>
<comment type="catalytic activity">
    <reaction evidence="4">
        <text>a 2'-deoxyribonucleoside 5'-diphosphate + [thioredoxin]-disulfide + H2O = a ribonucleoside 5'-diphosphate + [thioredoxin]-dithiol</text>
        <dbReference type="Rhea" id="RHEA:23252"/>
        <dbReference type="Rhea" id="RHEA-COMP:10698"/>
        <dbReference type="Rhea" id="RHEA-COMP:10700"/>
        <dbReference type="ChEBI" id="CHEBI:15377"/>
        <dbReference type="ChEBI" id="CHEBI:29950"/>
        <dbReference type="ChEBI" id="CHEBI:50058"/>
        <dbReference type="ChEBI" id="CHEBI:57930"/>
        <dbReference type="ChEBI" id="CHEBI:73316"/>
        <dbReference type="EC" id="1.17.4.1"/>
    </reaction>
</comment>
<comment type="cofactor">
    <cofactor evidence="1">
        <name>Fe cation</name>
        <dbReference type="ChEBI" id="CHEBI:24875"/>
    </cofactor>
    <text evidence="1">Binds 2 iron ions per subunit.</text>
</comment>
<comment type="subunit">
    <text evidence="3">Heterodimer of a large and a small subunit. Interacts (via Cy motif and when phosphorylated at Thr-33) with CCNF; the interaction occurs exclusively in G2 and early M (By similarity).</text>
</comment>
<comment type="subcellular location">
    <subcellularLocation>
        <location evidence="3">Cytoplasm</location>
    </subcellularLocation>
    <subcellularLocation>
        <location evidence="3">Nucleus</location>
    </subcellularLocation>
    <text evidence="3">Localized to the cytoplasm in S phase cells. May localize to the nucleus in G2 phase cells.</text>
</comment>
<comment type="PTM">
    <text evidence="3">Phosphorylation on Ser-20 relieves the inhibitory effect on Wnt signaling (By similarity). Phosphorylated on Thr-33 by CDK1 and CDK2; predominantly in G2 and M phase (By similarity).</text>
</comment>
<comment type="PTM">
    <text evidence="3">Ubiquitinated by the SCF(CCNF) E3 ubiquitin-protein ligase complex; leading to its degradation by the proteasome.</text>
</comment>
<comment type="miscellaneous">
    <text evidence="1">Two distinct regulatory sites have been defined: the specificity site, which controls substrate specificity, and the activity site which regulates overall catalytic activity. A substrate-binding catalytic site, located on M1, is formed only in the presence of the second subunit M2 (By similarity).</text>
</comment>
<comment type="similarity">
    <text evidence="5">Belongs to the ribonucleoside diphosphate reductase small chain family.</text>
</comment>